<reference key="1">
    <citation type="journal article" date="2004" name="Proc. Natl. Acad. Sci. U.S.A.">
        <title>The diploid genome sequence of Candida albicans.</title>
        <authorList>
            <person name="Jones T."/>
            <person name="Federspiel N.A."/>
            <person name="Chibana H."/>
            <person name="Dungan J."/>
            <person name="Kalman S."/>
            <person name="Magee B.B."/>
            <person name="Newport G."/>
            <person name="Thorstenson Y.R."/>
            <person name="Agabian N."/>
            <person name="Magee P.T."/>
            <person name="Davis R.W."/>
            <person name="Scherer S."/>
        </authorList>
    </citation>
    <scope>NUCLEOTIDE SEQUENCE [LARGE SCALE GENOMIC DNA]</scope>
    <source>
        <strain>SC5314 / ATCC MYA-2876</strain>
    </source>
</reference>
<reference key="2">
    <citation type="journal article" date="2007" name="Genome Biol.">
        <title>Assembly of the Candida albicans genome into sixteen supercontigs aligned on the eight chromosomes.</title>
        <authorList>
            <person name="van het Hoog M."/>
            <person name="Rast T.J."/>
            <person name="Martchenko M."/>
            <person name="Grindle S."/>
            <person name="Dignard D."/>
            <person name="Hogues H."/>
            <person name="Cuomo C."/>
            <person name="Berriman M."/>
            <person name="Scherer S."/>
            <person name="Magee B.B."/>
            <person name="Whiteway M."/>
            <person name="Chibana H."/>
            <person name="Nantel A."/>
            <person name="Magee P.T."/>
        </authorList>
    </citation>
    <scope>GENOME REANNOTATION</scope>
    <source>
        <strain>SC5314 / ATCC MYA-2876</strain>
    </source>
</reference>
<reference key="3">
    <citation type="journal article" date="2013" name="Genome Biol.">
        <title>Assembly of a phased diploid Candida albicans genome facilitates allele-specific measurements and provides a simple model for repeat and indel structure.</title>
        <authorList>
            <person name="Muzzey D."/>
            <person name="Schwartz K."/>
            <person name="Weissman J.S."/>
            <person name="Sherlock G."/>
        </authorList>
    </citation>
    <scope>NUCLEOTIDE SEQUENCE [LARGE SCALE GENOMIC DNA]</scope>
    <scope>GENOME REANNOTATION</scope>
    <source>
        <strain>SC5314 / ATCC MYA-2876</strain>
    </source>
</reference>
<reference key="4">
    <citation type="journal article" date="2003" name="Yeast">
        <title>Genome-wide identification of fungal GPI proteins.</title>
        <authorList>
            <person name="De Groot P.W."/>
            <person name="Hellingwerf K.J."/>
            <person name="Klis F.M."/>
        </authorList>
    </citation>
    <scope>PREDICTION OF GPI-ANCHOR</scope>
</reference>
<reference key="5">
    <citation type="journal article" date="2005" name="Mol. Biol. Cell">
        <title>Global roles of Ssn6 in Tup1- and Nrg1-dependent gene regulation in the fungal pathogen, Candida albicans.</title>
        <authorList>
            <person name="Garcia-Sanchez S."/>
            <person name="Mavor A.L."/>
            <person name="Russell C.L."/>
            <person name="Argimon S."/>
            <person name="Dennison P."/>
            <person name="Enjalbert B."/>
            <person name="Brown A.J."/>
        </authorList>
    </citation>
    <scope>INDUCTION</scope>
</reference>
<reference key="6">
    <citation type="journal article" date="2006" name="Fungal Genet. Biol.">
        <title>Genomic response programs of Candida albicans following protoplasting and regeneration.</title>
        <authorList>
            <person name="Castillo L."/>
            <person name="Martinez A.I."/>
            <person name="Garcera A."/>
            <person name="Garcia-Martinez J."/>
            <person name="Ruiz-Herrera J."/>
            <person name="Valentin E."/>
            <person name="Sentandreu R."/>
        </authorList>
    </citation>
    <scope>INDUCTION</scope>
</reference>
<reference key="7">
    <citation type="journal article" date="2009" name="Fungal Genet. Biol.">
        <title>Genome-wide analysis of Candida albicans gene expression patterns during infection of the mammalian kidney.</title>
        <authorList>
            <person name="Walker L.A."/>
            <person name="Maccallum D.M."/>
            <person name="Bertram G."/>
            <person name="Gow N.A."/>
            <person name="Odds F.C."/>
            <person name="Brown A.J."/>
        </authorList>
    </citation>
    <scope>INDUCTION</scope>
</reference>
<reference key="8">
    <citation type="journal article" date="2009" name="Infect. Immun.">
        <title>A multifunctional, synthetic Gaussia princeps luciferase reporter for live imaging of Candida albicans infections.</title>
        <authorList>
            <person name="Enjalbert B."/>
            <person name="Rachini A."/>
            <person name="Vediyappan G."/>
            <person name="Pietrella D."/>
            <person name="Spaccapelo R."/>
            <person name="Vecchiarelli A."/>
            <person name="Brown A.J."/>
            <person name="d'Enfert C."/>
        </authorList>
    </citation>
    <scope>SUBCELLULAR LOCATION</scope>
</reference>
<reference key="9">
    <citation type="journal article" date="2009" name="Microbiology">
        <title>The GPI-modified proteins Pga59 and Pga62 of Candida albicans are required for cell wall integrity.</title>
        <authorList>
            <person name="Moreno-Ruiz E."/>
            <person name="Ortu G."/>
            <person name="de Groot P.W."/>
            <person name="Cottier F."/>
            <person name="Loussert C."/>
            <person name="Prevost M.C."/>
            <person name="de Koster C."/>
            <person name="Klis F.M."/>
            <person name="Goyard S."/>
            <person name="d'Enfert C."/>
        </authorList>
    </citation>
    <scope>IDENTIFICATION BY MASS SPECTROMETRY</scope>
    <scope>SUBCELLULAR LOCATION</scope>
    <scope>GLYCOSYLATION</scope>
    <scope>FUNCTION</scope>
    <scope>DISRUPTION PHENOTYPE</scope>
</reference>
<reference key="10">
    <citation type="journal article" date="2011" name="J. Biol. Chem.">
        <title>Cap2-HAP complex is a critical transcriptional regulator that has dual but contrasting roles in regulation of iron homeostasis in Candida albicans.</title>
        <authorList>
            <person name="Singh R.P."/>
            <person name="Prasad H.K."/>
            <person name="Sinha I."/>
            <person name="Agarwal N."/>
            <person name="Natarajan K."/>
        </authorList>
    </citation>
    <scope>INDUCTION</scope>
</reference>
<keyword id="KW-0134">Cell wall</keyword>
<keyword id="KW-0325">Glycoprotein</keyword>
<keyword id="KW-0336">GPI-anchor</keyword>
<keyword id="KW-0449">Lipoprotein</keyword>
<keyword id="KW-0472">Membrane</keyword>
<keyword id="KW-1185">Reference proteome</keyword>
<keyword id="KW-0964">Secreted</keyword>
<keyword id="KW-0732">Signal</keyword>
<evidence type="ECO:0000255" key="1"/>
<evidence type="ECO:0000269" key="2">
    <source>
    </source>
</evidence>
<evidence type="ECO:0000269" key="3">
    <source>
    </source>
</evidence>
<evidence type="ECO:0000269" key="4">
    <source>
    </source>
</evidence>
<evidence type="ECO:0000269" key="5">
    <source>
    </source>
</evidence>
<evidence type="ECO:0000269" key="6">
    <source>
    </source>
</evidence>
<evidence type="ECO:0000269" key="7">
    <source>
    </source>
</evidence>
<evidence type="ECO:0000305" key="8"/>
<organism>
    <name type="scientific">Candida albicans (strain SC5314 / ATCC MYA-2876)</name>
    <name type="common">Yeast</name>
    <dbReference type="NCBI Taxonomy" id="237561"/>
    <lineage>
        <taxon>Eukaryota</taxon>
        <taxon>Fungi</taxon>
        <taxon>Dikarya</taxon>
        <taxon>Ascomycota</taxon>
        <taxon>Saccharomycotina</taxon>
        <taxon>Pichiomycetes</taxon>
        <taxon>Debaryomycetaceae</taxon>
        <taxon>Candida/Lodderomyces clade</taxon>
        <taxon>Candida</taxon>
    </lineage>
</organism>
<comment type="function">
    <text evidence="5">Cell wall protein necessary for cell wall integrity. Plays only a minor role in hyphal morphogenesis and is not critical to biofilm formation.</text>
</comment>
<comment type="subcellular location">
    <subcellularLocation>
        <location evidence="5 6">Secreted</location>
        <location evidence="5 6">Cell wall</location>
    </subcellularLocation>
    <subcellularLocation>
        <location evidence="8">Membrane</location>
        <topology evidence="8">Lipid-anchor</topology>
        <topology evidence="8">GPI-anchor</topology>
    </subcellularLocation>
</comment>
<comment type="induction">
    <text evidence="2 3 4 7">Up-regulated during cell wall regeneration and down-regulated in kidney lesions. Expression is also regulated by HAP43 and SSN6.</text>
</comment>
<comment type="PTM">
    <text evidence="5">N- and O-glycosylated.</text>
</comment>
<comment type="PTM">
    <text>The GPI-anchor is attached to the protein in the endoplasmic reticulum and serves to target the protein to the cell surface. There, the glucosamine-inositol phospholipid moiety is cleaved off and the GPI-modified mannoprotein is covalently attached via its lipidless GPI glycan remnant to the 1,6-beta-glucan of the outer cell wall layer.</text>
</comment>
<comment type="disruption phenotype">
    <text evidence="5">Leads to an altered cell wall structure with a less electron dense inner layer of the cell wall, and a disorganized outer layer.</text>
</comment>
<comment type="similarity">
    <text evidence="8">Belongs to the HWP1 family.</text>
</comment>
<name>PGA59_CANAL</name>
<accession>Q5AF39</accession>
<accession>A0A1D8PLI6</accession>
<protein>
    <recommendedName>
        <fullName>Cell wall protein PGA59</fullName>
    </recommendedName>
    <alternativeName>
        <fullName>GPI-anchored protein 59</fullName>
    </alternativeName>
</protein>
<feature type="signal peptide" evidence="1">
    <location>
        <begin position="1"/>
        <end position="18"/>
    </location>
</feature>
<feature type="chain" id="PRO_0000424731" description="Cell wall protein PGA59">
    <location>
        <begin position="19"/>
        <end position="92"/>
    </location>
</feature>
<feature type="propeptide" id="PRO_0000424732" description="Removed in mature form" evidence="1">
    <location>
        <begin position="93"/>
        <end position="113"/>
    </location>
</feature>
<feature type="lipid moiety-binding region" description="GPI-anchor amidated glycine" evidence="1">
    <location>
        <position position="92"/>
    </location>
</feature>
<feature type="glycosylation site" description="N-linked (GlcNAc...) asparagine" evidence="1">
    <location>
        <position position="22"/>
    </location>
</feature>
<feature type="glycosylation site" description="N-linked (GlcNAc...) asparagine" evidence="1">
    <location>
        <position position="80"/>
    </location>
</feature>
<gene>
    <name type="primary">PGA59</name>
    <name type="ordered locus">CAALFM_C402370CA</name>
    <name type="ORF">CaO19.10283</name>
    <name type="ORF">CaO19.2767</name>
</gene>
<dbReference type="EMBL" id="CP017626">
    <property type="protein sequence ID" value="AOW29007.1"/>
    <property type="molecule type" value="Genomic_DNA"/>
</dbReference>
<dbReference type="RefSeq" id="XP_720517.1">
    <property type="nucleotide sequence ID" value="XM_715424.2"/>
</dbReference>
<dbReference type="FunCoup" id="Q5AF39">
    <property type="interactions" value="53"/>
</dbReference>
<dbReference type="STRING" id="237561.Q5AF39"/>
<dbReference type="GlyCosmos" id="Q5AF39">
    <property type="glycosylation" value="2 sites, No reported glycans"/>
</dbReference>
<dbReference type="EnsemblFungi" id="C4_02370C_A-T">
    <property type="protein sequence ID" value="C4_02370C_A-T-p1"/>
    <property type="gene ID" value="C4_02370C_A"/>
</dbReference>
<dbReference type="GeneID" id="3637881"/>
<dbReference type="KEGG" id="cal:CAALFM_C402370CA"/>
<dbReference type="CGD" id="CAL0000185470">
    <property type="gene designation" value="PGA59"/>
</dbReference>
<dbReference type="VEuPathDB" id="FungiDB:C4_02370C_A"/>
<dbReference type="eggNOG" id="ENOG502S42T">
    <property type="taxonomic scope" value="Eukaryota"/>
</dbReference>
<dbReference type="HOGENOM" id="CLU_105987_0_0_1"/>
<dbReference type="InParanoid" id="Q5AF39"/>
<dbReference type="OMA" id="SCEDHAC"/>
<dbReference type="PRO" id="PR:Q5AF39"/>
<dbReference type="Proteomes" id="UP000000559">
    <property type="component" value="Chromosome 4"/>
</dbReference>
<dbReference type="GO" id="GO:0005576">
    <property type="term" value="C:extracellular region"/>
    <property type="evidence" value="ECO:0007669"/>
    <property type="project" value="UniProtKB-KW"/>
</dbReference>
<dbReference type="GO" id="GO:0009277">
    <property type="term" value="C:fungal-type cell wall"/>
    <property type="evidence" value="ECO:0000314"/>
    <property type="project" value="CGD"/>
</dbReference>
<dbReference type="GO" id="GO:0098552">
    <property type="term" value="C:side of membrane"/>
    <property type="evidence" value="ECO:0007669"/>
    <property type="project" value="UniProtKB-KW"/>
</dbReference>
<dbReference type="GO" id="GO:1990000">
    <property type="term" value="P:amyloid fibril formation"/>
    <property type="evidence" value="ECO:0000314"/>
    <property type="project" value="CGD"/>
</dbReference>
<dbReference type="GO" id="GO:0036244">
    <property type="term" value="P:cellular response to neutral pH"/>
    <property type="evidence" value="ECO:0000315"/>
    <property type="project" value="CGD"/>
</dbReference>
<dbReference type="GO" id="GO:0030447">
    <property type="term" value="P:filamentous growth"/>
    <property type="evidence" value="ECO:0000315"/>
    <property type="project" value="CGD"/>
</dbReference>
<dbReference type="GO" id="GO:0036178">
    <property type="term" value="P:filamentous growth of a population of unicellular organisms in response to neutral pH"/>
    <property type="evidence" value="ECO:0000315"/>
    <property type="project" value="CGD"/>
</dbReference>
<dbReference type="GO" id="GO:0009272">
    <property type="term" value="P:fungal-type cell wall biogenesis"/>
    <property type="evidence" value="ECO:0000314"/>
    <property type="project" value="CGD"/>
</dbReference>
<dbReference type="GO" id="GO:0031505">
    <property type="term" value="P:fungal-type cell wall organization"/>
    <property type="evidence" value="ECO:0000314"/>
    <property type="project" value="CGD"/>
</dbReference>
<dbReference type="InterPro" id="IPR025928">
    <property type="entry name" value="Flocculin_t3_rpt"/>
</dbReference>
<dbReference type="Pfam" id="PF13928">
    <property type="entry name" value="Flocculin_t3"/>
    <property type="match status" value="1"/>
</dbReference>
<proteinExistence type="evidence at protein level"/>
<sequence>MQFSSAIILSAVAGSALATYANSTVTDIATTVVTITSCEENKCHETEVTTGVTTVTEVETTYTTYCPLPTAKAPVASTSNSTTTPPVSTAEGAAAANAVPAVAAGLLALGAFM</sequence>